<accession>Q4WP03</accession>
<gene>
    <name type="primary">eaf1</name>
    <name type="synonym">vid21</name>
    <name type="ORF">AFUA_4G07560</name>
</gene>
<proteinExistence type="inferred from homology"/>
<keyword id="KW-0010">Activator</keyword>
<keyword id="KW-0156">Chromatin regulator</keyword>
<keyword id="KW-0227">DNA damage</keyword>
<keyword id="KW-0234">DNA repair</keyword>
<keyword id="KW-0539">Nucleus</keyword>
<keyword id="KW-1185">Reference proteome</keyword>
<keyword id="KW-0804">Transcription</keyword>
<keyword id="KW-0805">Transcription regulation</keyword>
<dbReference type="EMBL" id="AAHF01000005">
    <property type="protein sequence ID" value="EAL90031.1"/>
    <property type="molecule type" value="Genomic_DNA"/>
</dbReference>
<dbReference type="RefSeq" id="XP_752069.1">
    <property type="nucleotide sequence ID" value="XM_746976.1"/>
</dbReference>
<dbReference type="STRING" id="330879.Q4WP03"/>
<dbReference type="EnsemblFungi" id="EAL90031">
    <property type="protein sequence ID" value="EAL90031"/>
    <property type="gene ID" value="AFUA_4G07560"/>
</dbReference>
<dbReference type="GeneID" id="3509005"/>
<dbReference type="KEGG" id="afm:AFUA_4G07560"/>
<dbReference type="VEuPathDB" id="FungiDB:Afu4g07560"/>
<dbReference type="eggNOG" id="ENOG502RGMX">
    <property type="taxonomic scope" value="Eukaryota"/>
</dbReference>
<dbReference type="HOGENOM" id="CLU_001331_1_0_1"/>
<dbReference type="InParanoid" id="Q4WP03"/>
<dbReference type="OMA" id="KQQHASH"/>
<dbReference type="OrthoDB" id="5364245at2759"/>
<dbReference type="Proteomes" id="UP000002530">
    <property type="component" value="Chromosome 4"/>
</dbReference>
<dbReference type="GO" id="GO:0035267">
    <property type="term" value="C:NuA4 histone acetyltransferase complex"/>
    <property type="evidence" value="ECO:0000318"/>
    <property type="project" value="GO_Central"/>
</dbReference>
<dbReference type="GO" id="GO:0005634">
    <property type="term" value="C:nucleus"/>
    <property type="evidence" value="ECO:0007669"/>
    <property type="project" value="UniProtKB-SubCell"/>
</dbReference>
<dbReference type="GO" id="GO:0003682">
    <property type="term" value="F:chromatin binding"/>
    <property type="evidence" value="ECO:0000318"/>
    <property type="project" value="GO_Central"/>
</dbReference>
<dbReference type="GO" id="GO:0006325">
    <property type="term" value="P:chromatin organization"/>
    <property type="evidence" value="ECO:0007669"/>
    <property type="project" value="UniProtKB-KW"/>
</dbReference>
<dbReference type="GO" id="GO:0006281">
    <property type="term" value="P:DNA repair"/>
    <property type="evidence" value="ECO:0000318"/>
    <property type="project" value="GO_Central"/>
</dbReference>
<dbReference type="CDD" id="cd00167">
    <property type="entry name" value="SANT"/>
    <property type="match status" value="1"/>
</dbReference>
<dbReference type="Gene3D" id="1.10.10.60">
    <property type="entry name" value="Homeodomain-like"/>
    <property type="match status" value="1"/>
</dbReference>
<dbReference type="InterPro" id="IPR009057">
    <property type="entry name" value="Homeodomain-like_sf"/>
</dbReference>
<dbReference type="InterPro" id="IPR014012">
    <property type="entry name" value="HSA_dom"/>
</dbReference>
<dbReference type="InterPro" id="IPR001005">
    <property type="entry name" value="SANT/Myb"/>
</dbReference>
<dbReference type="PANTHER" id="PTHR46459:SF1">
    <property type="entry name" value="E1A-BINDING PROTEIN P400"/>
    <property type="match status" value="1"/>
</dbReference>
<dbReference type="PANTHER" id="PTHR46459">
    <property type="entry name" value="E1A-BINDING PROTEIN P400-RELATED"/>
    <property type="match status" value="1"/>
</dbReference>
<dbReference type="Pfam" id="PF07529">
    <property type="entry name" value="HSA"/>
    <property type="match status" value="1"/>
</dbReference>
<dbReference type="Pfam" id="PF13921">
    <property type="entry name" value="Myb_DNA-bind_6"/>
    <property type="match status" value="1"/>
</dbReference>
<dbReference type="SMART" id="SM00573">
    <property type="entry name" value="HSA"/>
    <property type="match status" value="1"/>
</dbReference>
<dbReference type="SMART" id="SM00717">
    <property type="entry name" value="SANT"/>
    <property type="match status" value="1"/>
</dbReference>
<dbReference type="SUPFAM" id="SSF46689">
    <property type="entry name" value="Homeodomain-like"/>
    <property type="match status" value="1"/>
</dbReference>
<dbReference type="PROSITE" id="PS51204">
    <property type="entry name" value="HSA"/>
    <property type="match status" value="1"/>
</dbReference>
<dbReference type="PROSITE" id="PS50090">
    <property type="entry name" value="MYB_LIKE"/>
    <property type="match status" value="1"/>
</dbReference>
<name>EAF1_ASPFU</name>
<sequence>MLRDELLRSKNDEIARCLLSRKRKLSELYFATVGFAGATENAPTNALYHQKEQTFLDANDLTKGRYFNEATLPPFPDFAALIPRPEEQHSSLEITEPVVQTDDVSSVIAPKAEGAVRGIAPSFQQQEGQTAQVIEQRLVEDSLKKDDARIHQQPALATTSEIPQVANSPTTPAQPDQLPQKASFAVPDTPPTSTSHESVDASVSPALKGLPPSEVAPPRAVSNQLPSAQRKPESRPSLVLAQPSEDQPLSPASSAGPYSNNTPAPVAVSPDTSPAEEVTEGADEVALSPKRVGPVQLQPGLVPSTPDEQLQLEAAQSLQQNALASKSIGDVTTASSLSNEVIKEDVGPTPSAAADSSKETQDQTSTSVEAPEPKRPDGVVVAPEESQPPAQSIQEETQSQVGAEVKVVASTTPAGKKPTAAAVLPAQPERMTTRVSSGAIRHKSVSEILGETPKPSAVQPEKAHAIEKPADMVRAPASASPESAAKMRLKDRKAREKERSKLSTVVFPKQQQQQQQQQEKDDSLDIVRQYAGELARLNEEQDYLFTLFQNKAYAPPRGTNLSTLLASAHKTLTTSNHLLEYQEQMDCRTLRRIYALQNANRWPLRQLKRSVEPPRQGTHWDVLLDHMKWMRTDYREERKWKIAAAKSCADWCAEYVNSDPEHRALLRVPCRIPSKFEKKEAHASSMISPPEETTEEMLVVSQPTPDLIPSAEDESVSDGFNDEIRHDIRDTVAPAAIFSLGSDEFTFSLDMTPAAQKLLDELPIYTPVKIAPGANVPMFEQPPDSAWKTELLPVSKYASGRIKFHETESPRKRSRYDYSQYDSNPEHGMLDLPPEQTNVALFRPENKPIRDRIHPGHSFRPPTEYPMPSVGFFESRQSSQWTYAEDDELRRLVKEYSYNWSLISSCLTPSSQFTSGAERRTPWECFERWVGLEGLPADMSKTQYFRAYHQRIETAQRTVLAQQQAAQQQQQQQQQQQQQGGNNSGQAQPPIRRRTTQPVRVDRRRSSKHLALLDAMRKLAKKRETMLQKQQHASHLASLRKVNDANQPKPPISSPAEFSRLKYDRELKLQERQEQYRQQMIAQQRANLAAQRAGQIPSQQPMMNAPPGRTPNGIPHNPGTPGIPGATPNGMHNGMPNALPNGIPPGMGVSQGRPHMQGVPAGGPPMNGPIPPNPMAMKMMPQTGMPQGPGGRPGMPMQTSPDNTRVMREANRLQEQQRILQSRQQQPQPPQHQQPQAQQAQQQFHNQQQFGPQGSHSPNMNLPNVNGTPNNPAMMAAIQAGSGMQSPSLHNAMPQGVSTPSPRMGQPNLLSGGVVPTISSIQSQIQRSNPNMPPEQVNKLATDRLHQYQQQRMSQVAMNAAAGNMASVQANYQVPHDGNFQSPQPGMNGTPGMQVPQSQGFSPMMRVPQPAQQNRMGVGNSPAMNVALPQQSRSATPQTQRSGSAQAGPVPGSSKSPHPPQAQIPSG</sequence>
<organism>
    <name type="scientific">Aspergillus fumigatus (strain ATCC MYA-4609 / CBS 101355 / FGSC A1100 / Af293)</name>
    <name type="common">Neosartorya fumigata</name>
    <dbReference type="NCBI Taxonomy" id="330879"/>
    <lineage>
        <taxon>Eukaryota</taxon>
        <taxon>Fungi</taxon>
        <taxon>Dikarya</taxon>
        <taxon>Ascomycota</taxon>
        <taxon>Pezizomycotina</taxon>
        <taxon>Eurotiomycetes</taxon>
        <taxon>Eurotiomycetidae</taxon>
        <taxon>Eurotiales</taxon>
        <taxon>Aspergillaceae</taxon>
        <taxon>Aspergillus</taxon>
        <taxon>Aspergillus subgen. Fumigati</taxon>
    </lineage>
</organism>
<comment type="function">
    <text evidence="1">Component of the NuA4 histone acetyltransferase complex which is involved in transcriptional activation of selected genes principally by acetylation of nucleosomal histone H4 and H2A. The NuA4 complex is also involved in DNA repair (By similarity).</text>
</comment>
<comment type="subunit">
    <text evidence="1">Component of the NuA4 histone acetyltransferase complex.</text>
</comment>
<comment type="subcellular location">
    <subcellularLocation>
        <location evidence="5">Nucleus</location>
    </subcellularLocation>
</comment>
<comment type="similarity">
    <text evidence="5">Belongs to the EAF1 family.</text>
</comment>
<reference key="1">
    <citation type="journal article" date="2005" name="Nature">
        <title>Genomic sequence of the pathogenic and allergenic filamentous fungus Aspergillus fumigatus.</title>
        <authorList>
            <person name="Nierman W.C."/>
            <person name="Pain A."/>
            <person name="Anderson M.J."/>
            <person name="Wortman J.R."/>
            <person name="Kim H.S."/>
            <person name="Arroyo J."/>
            <person name="Berriman M."/>
            <person name="Abe K."/>
            <person name="Archer D.B."/>
            <person name="Bermejo C."/>
            <person name="Bennett J.W."/>
            <person name="Bowyer P."/>
            <person name="Chen D."/>
            <person name="Collins M."/>
            <person name="Coulsen R."/>
            <person name="Davies R."/>
            <person name="Dyer P.S."/>
            <person name="Farman M.L."/>
            <person name="Fedorova N."/>
            <person name="Fedorova N.D."/>
            <person name="Feldblyum T.V."/>
            <person name="Fischer R."/>
            <person name="Fosker N."/>
            <person name="Fraser A."/>
            <person name="Garcia J.L."/>
            <person name="Garcia M.J."/>
            <person name="Goble A."/>
            <person name="Goldman G.H."/>
            <person name="Gomi K."/>
            <person name="Griffith-Jones S."/>
            <person name="Gwilliam R."/>
            <person name="Haas B.J."/>
            <person name="Haas H."/>
            <person name="Harris D.E."/>
            <person name="Horiuchi H."/>
            <person name="Huang J."/>
            <person name="Humphray S."/>
            <person name="Jimenez J."/>
            <person name="Keller N."/>
            <person name="Khouri H."/>
            <person name="Kitamoto K."/>
            <person name="Kobayashi T."/>
            <person name="Konzack S."/>
            <person name="Kulkarni R."/>
            <person name="Kumagai T."/>
            <person name="Lafton A."/>
            <person name="Latge J.-P."/>
            <person name="Li W."/>
            <person name="Lord A."/>
            <person name="Lu C."/>
            <person name="Majoros W.H."/>
            <person name="May G.S."/>
            <person name="Miller B.L."/>
            <person name="Mohamoud Y."/>
            <person name="Molina M."/>
            <person name="Monod M."/>
            <person name="Mouyna I."/>
            <person name="Mulligan S."/>
            <person name="Murphy L.D."/>
            <person name="O'Neil S."/>
            <person name="Paulsen I."/>
            <person name="Penalva M.A."/>
            <person name="Pertea M."/>
            <person name="Price C."/>
            <person name="Pritchard B.L."/>
            <person name="Quail M.A."/>
            <person name="Rabbinowitsch E."/>
            <person name="Rawlins N."/>
            <person name="Rajandream M.A."/>
            <person name="Reichard U."/>
            <person name="Renauld H."/>
            <person name="Robson G.D."/>
            <person name="Rodriguez de Cordoba S."/>
            <person name="Rodriguez-Pena J.M."/>
            <person name="Ronning C.M."/>
            <person name="Rutter S."/>
            <person name="Salzberg S.L."/>
            <person name="Sanchez M."/>
            <person name="Sanchez-Ferrero J.C."/>
            <person name="Saunders D."/>
            <person name="Seeger K."/>
            <person name="Squares R."/>
            <person name="Squares S."/>
            <person name="Takeuchi M."/>
            <person name="Tekaia F."/>
            <person name="Turner G."/>
            <person name="Vazquez de Aldana C.R."/>
            <person name="Weidman J."/>
            <person name="White O."/>
            <person name="Woodward J.R."/>
            <person name="Yu J.-H."/>
            <person name="Fraser C.M."/>
            <person name="Galagan J.E."/>
            <person name="Asai K."/>
            <person name="Machida M."/>
            <person name="Hall N."/>
            <person name="Barrell B.G."/>
            <person name="Denning D.W."/>
        </authorList>
    </citation>
    <scope>NUCLEOTIDE SEQUENCE [LARGE SCALE GENOMIC DNA]</scope>
    <source>
        <strain>ATCC MYA-4609 / CBS 101355 / FGSC A1100 / Af293</strain>
    </source>
</reference>
<evidence type="ECO:0000250" key="1"/>
<evidence type="ECO:0000255" key="2">
    <source>
        <dbReference type="PROSITE-ProRule" id="PRU00133"/>
    </source>
</evidence>
<evidence type="ECO:0000255" key="3">
    <source>
        <dbReference type="PROSITE-ProRule" id="PRU00549"/>
    </source>
</evidence>
<evidence type="ECO:0000256" key="4">
    <source>
        <dbReference type="SAM" id="MobiDB-lite"/>
    </source>
</evidence>
<evidence type="ECO:0000305" key="5"/>
<feature type="chain" id="PRO_0000065814" description="Chromatin modification-related protein eaf1">
    <location>
        <begin position="1"/>
        <end position="1467"/>
    </location>
</feature>
<feature type="domain" description="HSA" evidence="3">
    <location>
        <begin position="607"/>
        <end position="686"/>
    </location>
</feature>
<feature type="domain" description="Myb-like" evidence="2">
    <location>
        <begin position="877"/>
        <end position="935"/>
    </location>
</feature>
<feature type="region of interest" description="Disordered" evidence="4">
    <location>
        <begin position="154"/>
        <end position="314"/>
    </location>
</feature>
<feature type="region of interest" description="Disordered" evidence="4">
    <location>
        <begin position="329"/>
        <end position="402"/>
    </location>
</feature>
<feature type="region of interest" description="Disordered" evidence="4">
    <location>
        <begin position="469"/>
        <end position="522"/>
    </location>
</feature>
<feature type="region of interest" description="Disordered" evidence="4">
    <location>
        <begin position="970"/>
        <end position="1058"/>
    </location>
</feature>
<feature type="region of interest" description="Disordered" evidence="4">
    <location>
        <begin position="1113"/>
        <end position="1202"/>
    </location>
</feature>
<feature type="region of interest" description="Disordered" evidence="4">
    <location>
        <begin position="1216"/>
        <end position="1307"/>
    </location>
</feature>
<feature type="region of interest" description="Disordered" evidence="4">
    <location>
        <begin position="1377"/>
        <end position="1467"/>
    </location>
</feature>
<feature type="compositionally biased region" description="Polar residues" evidence="4">
    <location>
        <begin position="155"/>
        <end position="174"/>
    </location>
</feature>
<feature type="compositionally biased region" description="Polar residues" evidence="4">
    <location>
        <begin position="244"/>
        <end position="263"/>
    </location>
</feature>
<feature type="compositionally biased region" description="Polar residues" evidence="4">
    <location>
        <begin position="330"/>
        <end position="339"/>
    </location>
</feature>
<feature type="compositionally biased region" description="Polar residues" evidence="4">
    <location>
        <begin position="388"/>
        <end position="401"/>
    </location>
</feature>
<feature type="compositionally biased region" description="Low complexity" evidence="4">
    <location>
        <begin position="475"/>
        <end position="484"/>
    </location>
</feature>
<feature type="compositionally biased region" description="Low complexity" evidence="4">
    <location>
        <begin position="970"/>
        <end position="979"/>
    </location>
</feature>
<feature type="compositionally biased region" description="Pro residues" evidence="4">
    <location>
        <begin position="1162"/>
        <end position="1174"/>
    </location>
</feature>
<feature type="compositionally biased region" description="Low complexity" evidence="4">
    <location>
        <begin position="1175"/>
        <end position="1186"/>
    </location>
</feature>
<feature type="compositionally biased region" description="Low complexity" evidence="4">
    <location>
        <begin position="1216"/>
        <end position="1226"/>
    </location>
</feature>
<feature type="compositionally biased region" description="Low complexity" evidence="4">
    <location>
        <begin position="1233"/>
        <end position="1253"/>
    </location>
</feature>
<feature type="compositionally biased region" description="Polar residues" evidence="4">
    <location>
        <begin position="1254"/>
        <end position="1271"/>
    </location>
</feature>
<feature type="compositionally biased region" description="Polar residues" evidence="4">
    <location>
        <begin position="1428"/>
        <end position="1445"/>
    </location>
</feature>
<feature type="compositionally biased region" description="Pro residues" evidence="4">
    <location>
        <begin position="1457"/>
        <end position="1467"/>
    </location>
</feature>
<protein>
    <recommendedName>
        <fullName>Chromatin modification-related protein eaf1</fullName>
    </recommendedName>
    <alternativeName>
        <fullName>Esa1-associated factor 1</fullName>
    </alternativeName>
    <alternativeName>
        <fullName>Vacuolar import and degradation protein 21</fullName>
    </alternativeName>
</protein>